<comment type="function">
    <text evidence="1">Endonuclease that is involved in the suppression of homologous recombination and thus may have a key role in the control of bacterial genetic diversity.</text>
</comment>
<comment type="function">
    <text evidence="1">Acts as a ribosome collision sensor, splitting the ribosome into its 2 subunits. Detects stalled/collided 70S ribosomes which it binds and splits by an ATP-hydrolysis driven conformational change. Acts upstream of the ribosome quality control system (RQC), a ribosome-associated complex that mediates the extraction of incompletely synthesized nascent chains from stalled ribosomes and their subsequent degradation. Probably generates substrates for RQC.</text>
</comment>
<comment type="subunit">
    <text evidence="1">Homodimer. Binds to stalled ribosomes, contacting rRNA.</text>
</comment>
<comment type="similarity">
    <text evidence="1">Belongs to the DNA mismatch repair MutS family. MutS2 subfamily.</text>
</comment>
<keyword id="KW-0067">ATP-binding</keyword>
<keyword id="KW-0238">DNA-binding</keyword>
<keyword id="KW-0255">Endonuclease</keyword>
<keyword id="KW-0378">Hydrolase</keyword>
<keyword id="KW-0540">Nuclease</keyword>
<keyword id="KW-0547">Nucleotide-binding</keyword>
<keyword id="KW-0694">RNA-binding</keyword>
<keyword id="KW-0699">rRNA-binding</keyword>
<name>MUTS2_LISMH</name>
<proteinExistence type="inferred from homology"/>
<organism>
    <name type="scientific">Listeria monocytogenes serotype 4a (strain HCC23)</name>
    <dbReference type="NCBI Taxonomy" id="552536"/>
    <lineage>
        <taxon>Bacteria</taxon>
        <taxon>Bacillati</taxon>
        <taxon>Bacillota</taxon>
        <taxon>Bacilli</taxon>
        <taxon>Bacillales</taxon>
        <taxon>Listeriaceae</taxon>
        <taxon>Listeria</taxon>
    </lineage>
</organism>
<feature type="chain" id="PRO_1000118564" description="Endonuclease MutS2">
    <location>
        <begin position="1"/>
        <end position="785"/>
    </location>
</feature>
<feature type="domain" description="Smr" evidence="1">
    <location>
        <begin position="710"/>
        <end position="785"/>
    </location>
</feature>
<feature type="binding site" evidence="1">
    <location>
        <begin position="335"/>
        <end position="342"/>
    </location>
    <ligand>
        <name>ATP</name>
        <dbReference type="ChEBI" id="CHEBI:30616"/>
    </ligand>
</feature>
<dbReference type="EC" id="3.1.-.-" evidence="1"/>
<dbReference type="EC" id="3.6.4.-" evidence="1"/>
<dbReference type="EMBL" id="CP001175">
    <property type="protein sequence ID" value="ACK39766.1"/>
    <property type="molecule type" value="Genomic_DNA"/>
</dbReference>
<dbReference type="RefSeq" id="WP_012581491.1">
    <property type="nucleotide sequence ID" value="NC_011660.1"/>
</dbReference>
<dbReference type="SMR" id="B8DI00"/>
<dbReference type="KEGG" id="lmh:LMHCC_1421"/>
<dbReference type="HOGENOM" id="CLU_011252_2_1_9"/>
<dbReference type="GO" id="GO:0005524">
    <property type="term" value="F:ATP binding"/>
    <property type="evidence" value="ECO:0007669"/>
    <property type="project" value="UniProtKB-UniRule"/>
</dbReference>
<dbReference type="GO" id="GO:0016887">
    <property type="term" value="F:ATP hydrolysis activity"/>
    <property type="evidence" value="ECO:0007669"/>
    <property type="project" value="InterPro"/>
</dbReference>
<dbReference type="GO" id="GO:0140664">
    <property type="term" value="F:ATP-dependent DNA damage sensor activity"/>
    <property type="evidence" value="ECO:0007669"/>
    <property type="project" value="InterPro"/>
</dbReference>
<dbReference type="GO" id="GO:0004519">
    <property type="term" value="F:endonuclease activity"/>
    <property type="evidence" value="ECO:0007669"/>
    <property type="project" value="UniProtKB-UniRule"/>
</dbReference>
<dbReference type="GO" id="GO:0030983">
    <property type="term" value="F:mismatched DNA binding"/>
    <property type="evidence" value="ECO:0007669"/>
    <property type="project" value="InterPro"/>
</dbReference>
<dbReference type="GO" id="GO:0043023">
    <property type="term" value="F:ribosomal large subunit binding"/>
    <property type="evidence" value="ECO:0007669"/>
    <property type="project" value="UniProtKB-UniRule"/>
</dbReference>
<dbReference type="GO" id="GO:0019843">
    <property type="term" value="F:rRNA binding"/>
    <property type="evidence" value="ECO:0007669"/>
    <property type="project" value="UniProtKB-UniRule"/>
</dbReference>
<dbReference type="GO" id="GO:0006298">
    <property type="term" value="P:mismatch repair"/>
    <property type="evidence" value="ECO:0007669"/>
    <property type="project" value="InterPro"/>
</dbReference>
<dbReference type="GO" id="GO:0045910">
    <property type="term" value="P:negative regulation of DNA recombination"/>
    <property type="evidence" value="ECO:0007669"/>
    <property type="project" value="InterPro"/>
</dbReference>
<dbReference type="GO" id="GO:0072344">
    <property type="term" value="P:rescue of stalled ribosome"/>
    <property type="evidence" value="ECO:0007669"/>
    <property type="project" value="UniProtKB-UniRule"/>
</dbReference>
<dbReference type="FunFam" id="3.40.50.300:FF:000830">
    <property type="entry name" value="Endonuclease MutS2"/>
    <property type="match status" value="1"/>
</dbReference>
<dbReference type="Gene3D" id="3.30.1370.110">
    <property type="match status" value="1"/>
</dbReference>
<dbReference type="Gene3D" id="3.40.50.300">
    <property type="entry name" value="P-loop containing nucleotide triphosphate hydrolases"/>
    <property type="match status" value="1"/>
</dbReference>
<dbReference type="HAMAP" id="MF_00092">
    <property type="entry name" value="MutS2"/>
    <property type="match status" value="1"/>
</dbReference>
<dbReference type="InterPro" id="IPR000432">
    <property type="entry name" value="DNA_mismatch_repair_MutS_C"/>
</dbReference>
<dbReference type="InterPro" id="IPR007696">
    <property type="entry name" value="DNA_mismatch_repair_MutS_core"/>
</dbReference>
<dbReference type="InterPro" id="IPR036187">
    <property type="entry name" value="DNA_mismatch_repair_MutS_sf"/>
</dbReference>
<dbReference type="InterPro" id="IPR046893">
    <property type="entry name" value="MSSS"/>
</dbReference>
<dbReference type="InterPro" id="IPR045076">
    <property type="entry name" value="MutS"/>
</dbReference>
<dbReference type="InterPro" id="IPR005747">
    <property type="entry name" value="MutS2"/>
</dbReference>
<dbReference type="InterPro" id="IPR027417">
    <property type="entry name" value="P-loop_NTPase"/>
</dbReference>
<dbReference type="InterPro" id="IPR002625">
    <property type="entry name" value="Smr_dom"/>
</dbReference>
<dbReference type="InterPro" id="IPR036063">
    <property type="entry name" value="Smr_dom_sf"/>
</dbReference>
<dbReference type="NCBIfam" id="TIGR01069">
    <property type="entry name" value="mutS2"/>
    <property type="match status" value="1"/>
</dbReference>
<dbReference type="PANTHER" id="PTHR48466:SF2">
    <property type="entry name" value="OS10G0509000 PROTEIN"/>
    <property type="match status" value="1"/>
</dbReference>
<dbReference type="PANTHER" id="PTHR48466">
    <property type="entry name" value="OS10G0509000 PROTEIN-RELATED"/>
    <property type="match status" value="1"/>
</dbReference>
<dbReference type="Pfam" id="PF20297">
    <property type="entry name" value="MSSS"/>
    <property type="match status" value="1"/>
</dbReference>
<dbReference type="Pfam" id="PF00488">
    <property type="entry name" value="MutS_V"/>
    <property type="match status" value="1"/>
</dbReference>
<dbReference type="Pfam" id="PF01713">
    <property type="entry name" value="Smr"/>
    <property type="match status" value="1"/>
</dbReference>
<dbReference type="PIRSF" id="PIRSF005814">
    <property type="entry name" value="MutS_YshD"/>
    <property type="match status" value="1"/>
</dbReference>
<dbReference type="SMART" id="SM00534">
    <property type="entry name" value="MUTSac"/>
    <property type="match status" value="1"/>
</dbReference>
<dbReference type="SMART" id="SM00533">
    <property type="entry name" value="MUTSd"/>
    <property type="match status" value="1"/>
</dbReference>
<dbReference type="SMART" id="SM00463">
    <property type="entry name" value="SMR"/>
    <property type="match status" value="1"/>
</dbReference>
<dbReference type="SUPFAM" id="SSF48334">
    <property type="entry name" value="DNA repair protein MutS, domain III"/>
    <property type="match status" value="1"/>
</dbReference>
<dbReference type="SUPFAM" id="SSF52540">
    <property type="entry name" value="P-loop containing nucleoside triphosphate hydrolases"/>
    <property type="match status" value="1"/>
</dbReference>
<dbReference type="SUPFAM" id="SSF160443">
    <property type="entry name" value="SMR domain-like"/>
    <property type="match status" value="1"/>
</dbReference>
<dbReference type="PROSITE" id="PS00486">
    <property type="entry name" value="DNA_MISMATCH_REPAIR_2"/>
    <property type="match status" value="1"/>
</dbReference>
<dbReference type="PROSITE" id="PS50828">
    <property type="entry name" value="SMR"/>
    <property type="match status" value="1"/>
</dbReference>
<accession>B8DI00</accession>
<reference key="1">
    <citation type="journal article" date="2011" name="J. Bacteriol.">
        <title>Genome sequence of lineage III Listeria monocytogenes strain HCC23.</title>
        <authorList>
            <person name="Steele C.L."/>
            <person name="Donaldson J.R."/>
            <person name="Paul D."/>
            <person name="Banes M.M."/>
            <person name="Arick T."/>
            <person name="Bridges S.M."/>
            <person name="Lawrence M.L."/>
        </authorList>
    </citation>
    <scope>NUCLEOTIDE SEQUENCE [LARGE SCALE GENOMIC DNA]</scope>
    <source>
        <strain>HCC23</strain>
    </source>
</reference>
<sequence>MEKKVEAILEFDKIKKQLTEFASSSLGEQAILELAPATDFQVVQKTQLETEEGAKIIRLRGSAPITGLTDVFAHLKRLEIGGDLNGLEIYQIGSNLRVSRQMKNFMNDLLEIGVEIPLLGALSDELLVLKEVEEDIAISVDESGKVLDTASEALSTIRRTLRRTEDRVREKLESYLRDRNASKMLSDAVITIRNDRYVIPVKQEYKGHYGGIVHDQSASGQTLFIEPQSVVDLNNERKALQAKEKQEIERILAEISASLAAWINEIHHNTFILGRFDFIFAKARFGKAMKAVTPHLSDAGVVHLIAARHPLLDAAKVVANDIYLGEDFTTIVITGPNTGGKTITLKTLGLLTLMAQSGLQIPAQEDSTIAVFEHVFADIGDEQSIEQSLSTFSSHMTNIVSILENVNQKSLILYDELGAGTDPQEGAALAIAILDASHAKGASVVATTHYPELKAYGYNRVHATNASVEFNVETLSPTYKLLIGVPGRSNAFDISRRLGLSENIITEARSLVDTESADLNDMISSLEEKRNLAETEYEEARELARGADSLLKDLQKEISNYYQQKDKLIEQASEKAATIVEKAEAEAEEIIHELRTMQLNGAAGIKEHELIDAKTRLGNAKPKTINKTIPQAPKQKPHVFQEGDNVRVLSLGQKGTLLNKISDKEWNVQIGIIKMKIKTADLEYIQPEKPKKQRIITSVHSSGSPAKSELDLRGERYEDALQKVDKYLDEALLAGYPQVAIIHGKGTGALRTGVTEYLKNHRMVKSIRFGAAAEGGNGVTIVEFK</sequence>
<evidence type="ECO:0000255" key="1">
    <source>
        <dbReference type="HAMAP-Rule" id="MF_00092"/>
    </source>
</evidence>
<gene>
    <name evidence="1" type="primary">mutS2</name>
    <name evidence="1" type="synonym">rqcU</name>
    <name type="ordered locus">LMHCC_1421</name>
</gene>
<protein>
    <recommendedName>
        <fullName evidence="1">Endonuclease MutS2</fullName>
        <ecNumber evidence="1">3.1.-.-</ecNumber>
    </recommendedName>
    <alternativeName>
        <fullName evidence="1">Ribosome-associated protein quality control-upstream factor</fullName>
        <shortName evidence="1">RQC-upstream factor</shortName>
        <shortName evidence="1">RqcU</shortName>
        <ecNumber evidence="1">3.6.4.-</ecNumber>
    </alternativeName>
</protein>